<dbReference type="EMBL" id="L77117">
    <property type="protein sequence ID" value="AAB99459.1"/>
    <property type="molecule type" value="Genomic_DNA"/>
</dbReference>
<dbReference type="PIR" id="A64480">
    <property type="entry name" value="A64480"/>
</dbReference>
<dbReference type="STRING" id="243232.MJ_1442"/>
<dbReference type="PaxDb" id="243232-MJ_1442"/>
<dbReference type="EnsemblBacteria" id="AAB99459">
    <property type="protein sequence ID" value="AAB99459"/>
    <property type="gene ID" value="MJ_1442"/>
</dbReference>
<dbReference type="KEGG" id="mja:MJ_1442"/>
<dbReference type="HOGENOM" id="CLU_1352121_0_0_2"/>
<dbReference type="InParanoid" id="Q58837"/>
<dbReference type="Proteomes" id="UP000000805">
    <property type="component" value="Chromosome"/>
</dbReference>
<dbReference type="GO" id="GO:0016020">
    <property type="term" value="C:membrane"/>
    <property type="evidence" value="ECO:0007669"/>
    <property type="project" value="UniProtKB-SubCell"/>
</dbReference>
<dbReference type="PROSITE" id="PS51257">
    <property type="entry name" value="PROKAR_LIPOPROTEIN"/>
    <property type="match status" value="1"/>
</dbReference>
<keyword id="KW-0472">Membrane</keyword>
<keyword id="KW-1185">Reference proteome</keyword>
<keyword id="KW-0812">Transmembrane</keyword>
<keyword id="KW-1133">Transmembrane helix</keyword>
<sequence length="202" mass="22658">MTSIRIFIKFYGGTMRKFLIFLIFLSVLGCGITISGCIGGKNVEEIQNMQEQVVQQQQNENQEEYQNEDEGVDYNSIRDVQPIGTAKEADEKIRPILNEVFGEVKLMEYVSTGKQNEGESIVLTYVPKRKITTNDFEKLNEAIKKSGYFESSGGIAGGGQSGEGMVLWYVSKDNKSAIQIILYPDTNEIVVGYYKGKIYSSQ</sequence>
<evidence type="ECO:0000255" key="1"/>
<evidence type="ECO:0000305" key="2"/>
<feature type="chain" id="PRO_0000107335" description="Uncharacterized protein MJ1442">
    <location>
        <begin position="1"/>
        <end position="202"/>
    </location>
</feature>
<feature type="transmembrane region" description="Helical" evidence="1">
    <location>
        <begin position="18"/>
        <end position="38"/>
    </location>
</feature>
<accession>Q58837</accession>
<comment type="subcellular location">
    <subcellularLocation>
        <location evidence="2">Membrane</location>
        <topology evidence="2">Single-pass membrane protein</topology>
    </subcellularLocation>
</comment>
<name>Y1442_METJA</name>
<protein>
    <recommendedName>
        <fullName>Uncharacterized protein MJ1442</fullName>
    </recommendedName>
</protein>
<proteinExistence type="predicted"/>
<gene>
    <name type="ordered locus">MJ1442</name>
</gene>
<reference key="1">
    <citation type="journal article" date="1996" name="Science">
        <title>Complete genome sequence of the methanogenic archaeon, Methanococcus jannaschii.</title>
        <authorList>
            <person name="Bult C.J."/>
            <person name="White O."/>
            <person name="Olsen G.J."/>
            <person name="Zhou L."/>
            <person name="Fleischmann R.D."/>
            <person name="Sutton G.G."/>
            <person name="Blake J.A."/>
            <person name="FitzGerald L.M."/>
            <person name="Clayton R.A."/>
            <person name="Gocayne J.D."/>
            <person name="Kerlavage A.R."/>
            <person name="Dougherty B.A."/>
            <person name="Tomb J.-F."/>
            <person name="Adams M.D."/>
            <person name="Reich C.I."/>
            <person name="Overbeek R."/>
            <person name="Kirkness E.F."/>
            <person name="Weinstock K.G."/>
            <person name="Merrick J.M."/>
            <person name="Glodek A."/>
            <person name="Scott J.L."/>
            <person name="Geoghagen N.S.M."/>
            <person name="Weidman J.F."/>
            <person name="Fuhrmann J.L."/>
            <person name="Nguyen D."/>
            <person name="Utterback T.R."/>
            <person name="Kelley J.M."/>
            <person name="Peterson J.D."/>
            <person name="Sadow P.W."/>
            <person name="Hanna M.C."/>
            <person name="Cotton M.D."/>
            <person name="Roberts K.M."/>
            <person name="Hurst M.A."/>
            <person name="Kaine B.P."/>
            <person name="Borodovsky M."/>
            <person name="Klenk H.-P."/>
            <person name="Fraser C.M."/>
            <person name="Smith H.O."/>
            <person name="Woese C.R."/>
            <person name="Venter J.C."/>
        </authorList>
    </citation>
    <scope>NUCLEOTIDE SEQUENCE [LARGE SCALE GENOMIC DNA]</scope>
    <source>
        <strain>ATCC 43067 / DSM 2661 / JAL-1 / JCM 10045 / NBRC 100440</strain>
    </source>
</reference>
<organism>
    <name type="scientific">Methanocaldococcus jannaschii (strain ATCC 43067 / DSM 2661 / JAL-1 / JCM 10045 / NBRC 100440)</name>
    <name type="common">Methanococcus jannaschii</name>
    <dbReference type="NCBI Taxonomy" id="243232"/>
    <lineage>
        <taxon>Archaea</taxon>
        <taxon>Methanobacteriati</taxon>
        <taxon>Methanobacteriota</taxon>
        <taxon>Methanomada group</taxon>
        <taxon>Methanococci</taxon>
        <taxon>Methanococcales</taxon>
        <taxon>Methanocaldococcaceae</taxon>
        <taxon>Methanocaldococcus</taxon>
    </lineage>
</organism>